<keyword id="KW-0067">ATP-binding</keyword>
<keyword id="KW-0227">DNA damage</keyword>
<keyword id="KW-0234">DNA repair</keyword>
<keyword id="KW-0238">DNA-binding</keyword>
<keyword id="KW-0347">Helicase</keyword>
<keyword id="KW-0378">Hydrolase</keyword>
<keyword id="KW-0413">Isomerase</keyword>
<keyword id="KW-0547">Nucleotide-binding</keyword>
<keyword id="KW-1185">Reference proteome</keyword>
<organism>
    <name type="scientific">Halobacterium salinarum (strain ATCC 700922 / JCM 11081 / NRC-1)</name>
    <name type="common">Halobacterium halobium</name>
    <dbReference type="NCBI Taxonomy" id="64091"/>
    <lineage>
        <taxon>Archaea</taxon>
        <taxon>Methanobacteriati</taxon>
        <taxon>Methanobacteriota</taxon>
        <taxon>Stenosarchaea group</taxon>
        <taxon>Halobacteria</taxon>
        <taxon>Halobacteriales</taxon>
        <taxon>Halobacteriaceae</taxon>
        <taxon>Halobacterium</taxon>
        <taxon>Halobacterium salinarum NRC-34001</taxon>
    </lineage>
</organism>
<feature type="chain" id="PRO_0000102105" description="ATP-dependent DNA helicase Hel308">
    <location>
        <begin position="1"/>
        <end position="783"/>
    </location>
</feature>
<feature type="domain" description="Helicase ATP-binding" evidence="1">
    <location>
        <begin position="34"/>
        <end position="209"/>
    </location>
</feature>
<feature type="domain" description="Helicase C-terminal" evidence="1">
    <location>
        <begin position="242"/>
        <end position="443"/>
    </location>
</feature>
<feature type="region of interest" description="Disordered" evidence="2">
    <location>
        <begin position="744"/>
        <end position="783"/>
    </location>
</feature>
<feature type="short sequence motif" description="DEAH box" evidence="1">
    <location>
        <begin position="154"/>
        <end position="157"/>
    </location>
</feature>
<feature type="binding site" evidence="1">
    <location>
        <position position="29"/>
    </location>
    <ligand>
        <name>ATP</name>
        <dbReference type="ChEBI" id="CHEBI:30616"/>
    </ligand>
</feature>
<feature type="binding site" evidence="1">
    <location>
        <begin position="47"/>
        <end position="54"/>
    </location>
    <ligand>
        <name>ATP</name>
        <dbReference type="ChEBI" id="CHEBI:30616"/>
    </ligand>
</feature>
<name>HELS_HALSA</name>
<dbReference type="EC" id="5.6.2.4" evidence="1"/>
<dbReference type="EMBL" id="AE004437">
    <property type="protein sequence ID" value="AAG20465.1"/>
    <property type="molecule type" value="Genomic_DNA"/>
</dbReference>
<dbReference type="PIR" id="E84387">
    <property type="entry name" value="E84387"/>
</dbReference>
<dbReference type="RefSeq" id="WP_010903767.1">
    <property type="nucleotide sequence ID" value="NC_002607.1"/>
</dbReference>
<dbReference type="SMR" id="Q9HMV6"/>
<dbReference type="FunCoup" id="Q9HMV6">
    <property type="interactions" value="59"/>
</dbReference>
<dbReference type="STRING" id="64091.VNG_2368G"/>
<dbReference type="PaxDb" id="64091-VNG_2368G"/>
<dbReference type="KEGG" id="hal:VNG_2368G"/>
<dbReference type="PATRIC" id="fig|64091.14.peg.1833"/>
<dbReference type="HOGENOM" id="CLU_006553_3_0_2"/>
<dbReference type="InParanoid" id="Q9HMV6"/>
<dbReference type="OrthoDB" id="371946at2157"/>
<dbReference type="PhylomeDB" id="Q9HMV6"/>
<dbReference type="Proteomes" id="UP000000554">
    <property type="component" value="Chromosome"/>
</dbReference>
<dbReference type="GO" id="GO:0043138">
    <property type="term" value="F:3'-5' DNA helicase activity"/>
    <property type="evidence" value="ECO:0007669"/>
    <property type="project" value="UniProtKB-UniRule"/>
</dbReference>
<dbReference type="GO" id="GO:0005524">
    <property type="term" value="F:ATP binding"/>
    <property type="evidence" value="ECO:0007669"/>
    <property type="project" value="UniProtKB-UniRule"/>
</dbReference>
<dbReference type="GO" id="GO:0016887">
    <property type="term" value="F:ATP hydrolysis activity"/>
    <property type="evidence" value="ECO:0007669"/>
    <property type="project" value="RHEA"/>
</dbReference>
<dbReference type="GO" id="GO:0003677">
    <property type="term" value="F:DNA binding"/>
    <property type="evidence" value="ECO:0007669"/>
    <property type="project" value="UniProtKB-UniRule"/>
</dbReference>
<dbReference type="GO" id="GO:0006281">
    <property type="term" value="P:DNA repair"/>
    <property type="evidence" value="ECO:0007669"/>
    <property type="project" value="UniProtKB-UniRule"/>
</dbReference>
<dbReference type="CDD" id="cd18028">
    <property type="entry name" value="DEXHc_archSki2"/>
    <property type="match status" value="1"/>
</dbReference>
<dbReference type="CDD" id="cd18795">
    <property type="entry name" value="SF2_C_Ski2"/>
    <property type="match status" value="1"/>
</dbReference>
<dbReference type="Gene3D" id="1.10.3380.30">
    <property type="match status" value="1"/>
</dbReference>
<dbReference type="Gene3D" id="1.10.150.20">
    <property type="entry name" value="5' to 3' exonuclease, C-terminal subdomain"/>
    <property type="match status" value="1"/>
</dbReference>
<dbReference type="Gene3D" id="3.40.50.300">
    <property type="entry name" value="P-loop containing nucleotide triphosphate hydrolases"/>
    <property type="match status" value="2"/>
</dbReference>
<dbReference type="HAMAP" id="MF_00442">
    <property type="entry name" value="Helicase_Hel308"/>
    <property type="match status" value="1"/>
</dbReference>
<dbReference type="InterPro" id="IPR011545">
    <property type="entry name" value="DEAD/DEAH_box_helicase_dom"/>
</dbReference>
<dbReference type="InterPro" id="IPR048772">
    <property type="entry name" value="Hel308-like_dom4"/>
</dbReference>
<dbReference type="InterPro" id="IPR050474">
    <property type="entry name" value="Hel308_SKI2-like"/>
</dbReference>
<dbReference type="InterPro" id="IPR014001">
    <property type="entry name" value="Helicase_ATP-bd"/>
</dbReference>
<dbReference type="InterPro" id="IPR001650">
    <property type="entry name" value="Helicase_C-like"/>
</dbReference>
<dbReference type="InterPro" id="IPR022965">
    <property type="entry name" value="Helicase_Hel308"/>
</dbReference>
<dbReference type="InterPro" id="IPR027417">
    <property type="entry name" value="P-loop_NTPase"/>
</dbReference>
<dbReference type="InterPro" id="IPR036390">
    <property type="entry name" value="WH_DNA-bd_sf"/>
</dbReference>
<dbReference type="NCBIfam" id="NF002654">
    <property type="entry name" value="PRK02362.1"/>
    <property type="match status" value="1"/>
</dbReference>
<dbReference type="PANTHER" id="PTHR47961:SF10">
    <property type="entry name" value="ATP-DEPENDENT DNA HELICASE HEL308"/>
    <property type="match status" value="1"/>
</dbReference>
<dbReference type="PANTHER" id="PTHR47961">
    <property type="entry name" value="DNA POLYMERASE THETA, PUTATIVE (AFU_ORTHOLOGUE AFUA_1G05260)-RELATED"/>
    <property type="match status" value="1"/>
</dbReference>
<dbReference type="Pfam" id="PF00270">
    <property type="entry name" value="DEAD"/>
    <property type="match status" value="1"/>
</dbReference>
<dbReference type="Pfam" id="PF00271">
    <property type="entry name" value="Helicase_C"/>
    <property type="match status" value="1"/>
</dbReference>
<dbReference type="Pfam" id="PF21280">
    <property type="entry name" value="Helicase_dom4_arc"/>
    <property type="match status" value="1"/>
</dbReference>
<dbReference type="SMART" id="SM00487">
    <property type="entry name" value="DEXDc"/>
    <property type="match status" value="1"/>
</dbReference>
<dbReference type="SMART" id="SM00490">
    <property type="entry name" value="HELICc"/>
    <property type="match status" value="1"/>
</dbReference>
<dbReference type="SUPFAM" id="SSF52540">
    <property type="entry name" value="P-loop containing nucleoside triphosphate hydrolases"/>
    <property type="match status" value="1"/>
</dbReference>
<dbReference type="SUPFAM" id="SSF158702">
    <property type="entry name" value="Sec63 N-terminal domain-like"/>
    <property type="match status" value="1"/>
</dbReference>
<dbReference type="SUPFAM" id="SSF46785">
    <property type="entry name" value="Winged helix' DNA-binding domain"/>
    <property type="match status" value="1"/>
</dbReference>
<dbReference type="PROSITE" id="PS51192">
    <property type="entry name" value="HELICASE_ATP_BIND_1"/>
    <property type="match status" value="1"/>
</dbReference>
<dbReference type="PROSITE" id="PS51194">
    <property type="entry name" value="HELICASE_CTER"/>
    <property type="match status" value="1"/>
</dbReference>
<accession>Q9HMV6</accession>
<reference key="1">
    <citation type="journal article" date="2000" name="Proc. Natl. Acad. Sci. U.S.A.">
        <title>Genome sequence of Halobacterium species NRC-1.</title>
        <authorList>
            <person name="Ng W.V."/>
            <person name="Kennedy S.P."/>
            <person name="Mahairas G.G."/>
            <person name="Berquist B."/>
            <person name="Pan M."/>
            <person name="Shukla H.D."/>
            <person name="Lasky S.R."/>
            <person name="Baliga N.S."/>
            <person name="Thorsson V."/>
            <person name="Sbrogna J."/>
            <person name="Swartzell S."/>
            <person name="Weir D."/>
            <person name="Hall J."/>
            <person name="Dahl T.A."/>
            <person name="Welti R."/>
            <person name="Goo Y.A."/>
            <person name="Leithauser B."/>
            <person name="Keller K."/>
            <person name="Cruz R."/>
            <person name="Danson M.J."/>
            <person name="Hough D.W."/>
            <person name="Maddocks D.G."/>
            <person name="Jablonski P.E."/>
            <person name="Krebs M.P."/>
            <person name="Angevine C.M."/>
            <person name="Dale H."/>
            <person name="Isenbarger T.A."/>
            <person name="Peck R.F."/>
            <person name="Pohlschroder M."/>
            <person name="Spudich J.L."/>
            <person name="Jung K.-H."/>
            <person name="Alam M."/>
            <person name="Freitas T."/>
            <person name="Hou S."/>
            <person name="Daniels C.J."/>
            <person name="Dennis P.P."/>
            <person name="Omer A.D."/>
            <person name="Ebhardt H."/>
            <person name="Lowe T.M."/>
            <person name="Liang P."/>
            <person name="Riley M."/>
            <person name="Hood L."/>
            <person name="DasSarma S."/>
        </authorList>
    </citation>
    <scope>NUCLEOTIDE SEQUENCE [LARGE SCALE GENOMIC DNA]</scope>
    <source>
        <strain>ATCC 700922 / JCM 11081 / NRC-1</strain>
    </source>
</reference>
<evidence type="ECO:0000255" key="1">
    <source>
        <dbReference type="HAMAP-Rule" id="MF_00442"/>
    </source>
</evidence>
<evidence type="ECO:0000256" key="2">
    <source>
        <dbReference type="SAM" id="MobiDB-lite"/>
    </source>
</evidence>
<proteinExistence type="inferred from homology"/>
<protein>
    <recommendedName>
        <fullName evidence="1">ATP-dependent DNA helicase Hel308</fullName>
        <ecNumber evidence="1">5.6.2.4</ecNumber>
    </recommendedName>
    <alternativeName>
        <fullName evidence="1">DNA 3'-5' helicase Hel308</fullName>
    </alternativeName>
</protein>
<gene>
    <name evidence="1" type="primary">hel308</name>
    <name type="ordered locus">VNG_2368G</name>
</gene>
<comment type="function">
    <text evidence="1">DNA-dependent ATPase and 3'-5' DNA helicase that may be involved in repair of stalled replication forks.</text>
</comment>
<comment type="catalytic activity">
    <reaction evidence="1">
        <text>Couples ATP hydrolysis with the unwinding of duplex DNA by translocating in the 3'-5' direction.</text>
        <dbReference type="EC" id="5.6.2.4"/>
    </reaction>
</comment>
<comment type="catalytic activity">
    <reaction evidence="1">
        <text>ATP + H2O = ADP + phosphate + H(+)</text>
        <dbReference type="Rhea" id="RHEA:13065"/>
        <dbReference type="ChEBI" id="CHEBI:15377"/>
        <dbReference type="ChEBI" id="CHEBI:15378"/>
        <dbReference type="ChEBI" id="CHEBI:30616"/>
        <dbReference type="ChEBI" id="CHEBI:43474"/>
        <dbReference type="ChEBI" id="CHEBI:456216"/>
        <dbReference type="EC" id="5.6.2.4"/>
    </reaction>
</comment>
<comment type="subunit">
    <text evidence="1">Monomer.</text>
</comment>
<comment type="similarity">
    <text evidence="1">Belongs to the helicase family. Hel308 subfamily.</text>
</comment>
<sequence length="783" mass="83580">MRVADVPGLPGGVADHFEGEGVEELYPPQAEAVERGVTEGANLVASVPTASGKTLIAQLAMLSAIAEGGDSPTFSGDGTALYIVPLRALAGEKAQEFEAFERFGLSVGVSTGNYERDGARLADNDIVVATSEKVDSLVRNGAGWIDDLSCVVADEVHLVDDDHRGPTLEVTLAKLRQQVADLQVVALSATVGNAGELAAWLDAELVDSDWRPIELRTGVHYGQSLHYDDGTQAELSVGSGSQTAAVVADTLADDGSTLVFVNSRRNAEASARRLADVTGNALSSAERERLADIAAEIRGVSDTETSDELADAVASGAAFHHAGLAREHRELVEEAFRDRLVKAVSATPTLAAGVNTPARRVVVRDWQRYDGTAGGMQPLDVLEVHQMFGRAGRPGLDPYGEAVLLANSHDELEELFDRYVYADPEPVRSKLAAEPALRTHVLAAIATGFTTTEDGLHEFLGGTLYATQTDDTGRLRSVTGDVLRYLDRNGFVERDGAALRATATGQLVSRLYVDPMSAATIIDGLRDAARDATETDDEGAFRPASELGDDAALPADASVEPTPLGLYHLVSRTPDMYELYLRSGDREQYTEVAYEHEDELLGATPREEQAEFEDWLSALKTARLMADWASELDEERIAERYDVGPGDIRGKVETAEWLLNAAERLAGELDVECGPAVREARKRVQYGVREELLGLAGVRNVGRKRARRLYNAGVESRADLRNADKGVVLGAVRGRAATAERILETVGHPDPGMDGVAADTDAAPESGGEAGGDEGQASLGDFS</sequence>